<proteinExistence type="inferred from homology"/>
<feature type="chain" id="PRO_0000378500" description="Ubiquitin carboxyl-terminal hydrolase 36">
    <location>
        <begin position="1"/>
        <end position="1059"/>
    </location>
</feature>
<feature type="domain" description="USP">
    <location>
        <begin position="171"/>
        <end position="479"/>
    </location>
</feature>
<feature type="region of interest" description="Disordered" evidence="5">
    <location>
        <begin position="24"/>
        <end position="49"/>
    </location>
</feature>
<feature type="region of interest" description="Disordered" evidence="5">
    <location>
        <begin position="94"/>
        <end position="148"/>
    </location>
</feature>
<feature type="region of interest" description="Disordered" evidence="5">
    <location>
        <begin position="505"/>
        <end position="673"/>
    </location>
</feature>
<feature type="region of interest" description="Disordered" evidence="5">
    <location>
        <begin position="687"/>
        <end position="893"/>
    </location>
</feature>
<feature type="region of interest" description="Disordered" evidence="5">
    <location>
        <begin position="926"/>
        <end position="998"/>
    </location>
</feature>
<feature type="region of interest" description="Disordered" evidence="5">
    <location>
        <begin position="1012"/>
        <end position="1059"/>
    </location>
</feature>
<feature type="compositionally biased region" description="Low complexity" evidence="5">
    <location>
        <begin position="94"/>
        <end position="123"/>
    </location>
</feature>
<feature type="compositionally biased region" description="Polar residues" evidence="5">
    <location>
        <begin position="130"/>
        <end position="139"/>
    </location>
</feature>
<feature type="compositionally biased region" description="Polar residues" evidence="5">
    <location>
        <begin position="528"/>
        <end position="539"/>
    </location>
</feature>
<feature type="compositionally biased region" description="Low complexity" evidence="5">
    <location>
        <begin position="540"/>
        <end position="560"/>
    </location>
</feature>
<feature type="compositionally biased region" description="Low complexity" evidence="5">
    <location>
        <begin position="592"/>
        <end position="611"/>
    </location>
</feature>
<feature type="compositionally biased region" description="Low complexity" evidence="5">
    <location>
        <begin position="633"/>
        <end position="647"/>
    </location>
</feature>
<feature type="compositionally biased region" description="Basic and acidic residues" evidence="5">
    <location>
        <begin position="655"/>
        <end position="664"/>
    </location>
</feature>
<feature type="compositionally biased region" description="Low complexity" evidence="5">
    <location>
        <begin position="729"/>
        <end position="739"/>
    </location>
</feature>
<feature type="compositionally biased region" description="Low complexity" evidence="5">
    <location>
        <begin position="752"/>
        <end position="765"/>
    </location>
</feature>
<feature type="compositionally biased region" description="Acidic residues" evidence="5">
    <location>
        <begin position="766"/>
        <end position="776"/>
    </location>
</feature>
<feature type="compositionally biased region" description="Polar residues" evidence="5">
    <location>
        <begin position="779"/>
        <end position="795"/>
    </location>
</feature>
<feature type="compositionally biased region" description="Pro residues" evidence="5">
    <location>
        <begin position="799"/>
        <end position="808"/>
    </location>
</feature>
<feature type="compositionally biased region" description="Acidic residues" evidence="5">
    <location>
        <begin position="825"/>
        <end position="839"/>
    </location>
</feature>
<feature type="compositionally biased region" description="Polar residues" evidence="5">
    <location>
        <begin position="842"/>
        <end position="862"/>
    </location>
</feature>
<feature type="compositionally biased region" description="Polar residues" evidence="5">
    <location>
        <begin position="876"/>
        <end position="893"/>
    </location>
</feature>
<feature type="compositionally biased region" description="Basic and acidic residues" evidence="5">
    <location>
        <begin position="926"/>
        <end position="940"/>
    </location>
</feature>
<feature type="compositionally biased region" description="Low complexity" evidence="5">
    <location>
        <begin position="1048"/>
        <end position="1059"/>
    </location>
</feature>
<feature type="active site" description="Nucleophile" evidence="3 4">
    <location>
        <position position="180"/>
    </location>
</feature>
<feature type="active site" description="Proton acceptor" evidence="3 4">
    <location>
        <position position="438"/>
    </location>
</feature>
<feature type="modified residue" description="Phosphoserine" evidence="1">
    <location>
        <position position="508"/>
    </location>
</feature>
<feature type="modified residue" description="Phosphoserine" evidence="1">
    <location>
        <position position="510"/>
    </location>
</feature>
<feature type="modified residue" description="Phosphothreonine" evidence="1">
    <location>
        <position position="673"/>
    </location>
</feature>
<feature type="modified residue" description="Phosphothreonine" evidence="1">
    <location>
        <position position="682"/>
    </location>
</feature>
<feature type="modified residue" description="Phosphoserine" evidence="1">
    <location>
        <position position="692"/>
    </location>
</feature>
<feature type="modified residue" description="Phosphoserine" evidence="1">
    <location>
        <position position="694"/>
    </location>
</feature>
<feature type="modified residue" description="Phosphoserine" evidence="1">
    <location>
        <position position="766"/>
    </location>
</feature>
<feature type="modified residue" description="Phosphoserine" evidence="1">
    <location>
        <position position="801"/>
    </location>
</feature>
<feature type="modified residue" description="Phosphothreonine" evidence="1">
    <location>
        <position position="804"/>
    </location>
</feature>
<feature type="modified residue" description="Phosphoserine" evidence="1">
    <location>
        <position position="807"/>
    </location>
</feature>
<feature type="modified residue" description="Phosphothreonine" evidence="1">
    <location>
        <position position="846"/>
    </location>
</feature>
<feature type="modified residue" description="Phosphothreonine" evidence="1">
    <location>
        <position position="861"/>
    </location>
</feature>
<accession>Q2LZB1</accession>
<protein>
    <recommendedName>
        <fullName>Ubiquitin carboxyl-terminal hydrolase 36</fullName>
        <ecNumber>3.4.19.12</ecNumber>
    </recommendedName>
    <alternativeName>
        <fullName>Deubiquitinating enzyme 36</fullName>
    </alternativeName>
    <alternativeName>
        <fullName>Protein scrawny</fullName>
    </alternativeName>
    <alternativeName>
        <fullName>Ubiquitin thioesterase 36</fullName>
    </alternativeName>
    <alternativeName>
        <fullName>Ubiquitin-specific-processing protease 36</fullName>
    </alternativeName>
</protein>
<comment type="function">
    <text evidence="2">Required for maintaining multiple types of adult stem cells, including male and female germline, epithelial follicle cell and intestinal stem cells. May function as a transcriptional repressor by continually deubiquiting histone H2B at the promoters of genes critical for cellular differentiation, thereby preventing histone H3 'Lys-4' trimethylation (H3K4). Controls selective autophagy activation by ubiquitinated proteins.</text>
</comment>
<comment type="catalytic activity">
    <reaction>
        <text>Thiol-dependent hydrolysis of ester, thioester, amide, peptide and isopeptide bonds formed by the C-terminal Gly of ubiquitin (a 76-residue protein attached to proteins as an intracellular targeting signal).</text>
        <dbReference type="EC" id="3.4.19.12"/>
    </reaction>
</comment>
<comment type="subunit">
    <text evidence="1">Interacts with atms/PAF1, but not with CycT.</text>
</comment>
<comment type="subcellular location">
    <subcellularLocation>
        <location evidence="1">Nucleus</location>
        <location evidence="1">Nucleolus</location>
    </subcellularLocation>
</comment>
<comment type="similarity">
    <text evidence="6">Belongs to the peptidase C19 family.</text>
</comment>
<organism>
    <name type="scientific">Drosophila pseudoobscura pseudoobscura</name>
    <name type="common">Fruit fly</name>
    <dbReference type="NCBI Taxonomy" id="46245"/>
    <lineage>
        <taxon>Eukaryota</taxon>
        <taxon>Metazoa</taxon>
        <taxon>Ecdysozoa</taxon>
        <taxon>Arthropoda</taxon>
        <taxon>Hexapoda</taxon>
        <taxon>Insecta</taxon>
        <taxon>Pterygota</taxon>
        <taxon>Neoptera</taxon>
        <taxon>Endopterygota</taxon>
        <taxon>Diptera</taxon>
        <taxon>Brachycera</taxon>
        <taxon>Muscomorpha</taxon>
        <taxon>Ephydroidea</taxon>
        <taxon>Drosophilidae</taxon>
        <taxon>Drosophila</taxon>
        <taxon>Sophophora</taxon>
    </lineage>
</organism>
<dbReference type="EC" id="3.4.19.12"/>
<dbReference type="EMBL" id="CH379069">
    <property type="protein sequence ID" value="EAL29597.2"/>
    <property type="molecule type" value="Genomic_DNA"/>
</dbReference>
<dbReference type="SMR" id="Q2LZB1"/>
<dbReference type="FunCoup" id="Q2LZB1">
    <property type="interactions" value="552"/>
</dbReference>
<dbReference type="STRING" id="46245.Q2LZB1"/>
<dbReference type="eggNOG" id="KOG1865">
    <property type="taxonomic scope" value="Eukaryota"/>
</dbReference>
<dbReference type="HOGENOM" id="CLU_006208_0_0_1"/>
<dbReference type="InParanoid" id="Q2LZB1"/>
<dbReference type="OMA" id="VCAMAKT"/>
<dbReference type="ChiTaRS" id="scny">
    <property type="organism name" value="fly"/>
</dbReference>
<dbReference type="Proteomes" id="UP000001819">
    <property type="component" value="Unplaced"/>
</dbReference>
<dbReference type="GO" id="GO:0005829">
    <property type="term" value="C:cytosol"/>
    <property type="evidence" value="ECO:0007669"/>
    <property type="project" value="TreeGrafter"/>
</dbReference>
<dbReference type="GO" id="GO:0005730">
    <property type="term" value="C:nucleolus"/>
    <property type="evidence" value="ECO:0000250"/>
    <property type="project" value="UniProtKB"/>
</dbReference>
<dbReference type="GO" id="GO:0004843">
    <property type="term" value="F:cysteine-type deubiquitinase activity"/>
    <property type="evidence" value="ECO:0000250"/>
    <property type="project" value="UniProtKB"/>
</dbReference>
<dbReference type="GO" id="GO:0030718">
    <property type="term" value="P:germ-line stem cell population maintenance"/>
    <property type="evidence" value="ECO:0000250"/>
    <property type="project" value="UniProtKB"/>
</dbReference>
<dbReference type="GO" id="GO:0016242">
    <property type="term" value="P:negative regulation of macroautophagy"/>
    <property type="evidence" value="ECO:0000250"/>
    <property type="project" value="UniProtKB"/>
</dbReference>
<dbReference type="GO" id="GO:0016579">
    <property type="term" value="P:protein deubiquitination"/>
    <property type="evidence" value="ECO:0000250"/>
    <property type="project" value="UniProtKB"/>
</dbReference>
<dbReference type="GO" id="GO:0006508">
    <property type="term" value="P:proteolysis"/>
    <property type="evidence" value="ECO:0007669"/>
    <property type="project" value="UniProtKB-KW"/>
</dbReference>
<dbReference type="GO" id="GO:0042981">
    <property type="term" value="P:regulation of apoptotic process"/>
    <property type="evidence" value="ECO:0007669"/>
    <property type="project" value="TreeGrafter"/>
</dbReference>
<dbReference type="GO" id="GO:0035019">
    <property type="term" value="P:somatic stem cell population maintenance"/>
    <property type="evidence" value="ECO:0000250"/>
    <property type="project" value="UniProtKB"/>
</dbReference>
<dbReference type="CDD" id="cd02661">
    <property type="entry name" value="Peptidase_C19E"/>
    <property type="match status" value="1"/>
</dbReference>
<dbReference type="FunFam" id="3.90.70.10:FF:000085">
    <property type="entry name" value="Ubiquitin carboxyl-terminal hydrolase 36"/>
    <property type="match status" value="1"/>
</dbReference>
<dbReference type="Gene3D" id="3.90.70.10">
    <property type="entry name" value="Cysteine proteinases"/>
    <property type="match status" value="1"/>
</dbReference>
<dbReference type="InterPro" id="IPR038765">
    <property type="entry name" value="Papain-like_cys_pep_sf"/>
</dbReference>
<dbReference type="InterPro" id="IPR050164">
    <property type="entry name" value="Peptidase_C19"/>
</dbReference>
<dbReference type="InterPro" id="IPR001394">
    <property type="entry name" value="Peptidase_C19_UCH"/>
</dbReference>
<dbReference type="InterPro" id="IPR018200">
    <property type="entry name" value="USP_CS"/>
</dbReference>
<dbReference type="InterPro" id="IPR028889">
    <property type="entry name" value="USP_dom"/>
</dbReference>
<dbReference type="PANTHER" id="PTHR24006">
    <property type="entry name" value="UBIQUITIN CARBOXYL-TERMINAL HYDROLASE"/>
    <property type="match status" value="1"/>
</dbReference>
<dbReference type="PANTHER" id="PTHR24006:SF758">
    <property type="entry name" value="UBIQUITIN CARBOXYL-TERMINAL HYDROLASE 36"/>
    <property type="match status" value="1"/>
</dbReference>
<dbReference type="Pfam" id="PF00443">
    <property type="entry name" value="UCH"/>
    <property type="match status" value="1"/>
</dbReference>
<dbReference type="SUPFAM" id="SSF54001">
    <property type="entry name" value="Cysteine proteinases"/>
    <property type="match status" value="1"/>
</dbReference>
<dbReference type="PROSITE" id="PS00972">
    <property type="entry name" value="USP_1"/>
    <property type="match status" value="1"/>
</dbReference>
<dbReference type="PROSITE" id="PS00973">
    <property type="entry name" value="USP_2"/>
    <property type="match status" value="1"/>
</dbReference>
<dbReference type="PROSITE" id="PS50235">
    <property type="entry name" value="USP_3"/>
    <property type="match status" value="1"/>
</dbReference>
<name>UBP36_DROPS</name>
<keyword id="KW-0378">Hydrolase</keyword>
<keyword id="KW-0539">Nucleus</keyword>
<keyword id="KW-0597">Phosphoprotein</keyword>
<keyword id="KW-0645">Protease</keyword>
<keyword id="KW-1185">Reference proteome</keyword>
<keyword id="KW-0788">Thiol protease</keyword>
<keyword id="KW-0833">Ubl conjugation pathway</keyword>
<reference key="1">
    <citation type="journal article" date="2005" name="Genome Res.">
        <title>Comparative genome sequencing of Drosophila pseudoobscura: chromosomal, gene, and cis-element evolution.</title>
        <authorList>
            <person name="Richards S."/>
            <person name="Liu Y."/>
            <person name="Bettencourt B.R."/>
            <person name="Hradecky P."/>
            <person name="Letovsky S."/>
            <person name="Nielsen R."/>
            <person name="Thornton K."/>
            <person name="Hubisz M.J."/>
            <person name="Chen R."/>
            <person name="Meisel R.P."/>
            <person name="Couronne O."/>
            <person name="Hua S."/>
            <person name="Smith M.A."/>
            <person name="Zhang P."/>
            <person name="Liu J."/>
            <person name="Bussemaker H.J."/>
            <person name="van Batenburg M.F."/>
            <person name="Howells S.L."/>
            <person name="Scherer S.E."/>
            <person name="Sodergren E."/>
            <person name="Matthews B.B."/>
            <person name="Crosby M.A."/>
            <person name="Schroeder A.J."/>
            <person name="Ortiz-Barrientos D."/>
            <person name="Rives C.M."/>
            <person name="Metzker M.L."/>
            <person name="Muzny D.M."/>
            <person name="Scott G."/>
            <person name="Steffen D."/>
            <person name="Wheeler D.A."/>
            <person name="Worley K.C."/>
            <person name="Havlak P."/>
            <person name="Durbin K.J."/>
            <person name="Egan A."/>
            <person name="Gill R."/>
            <person name="Hume J."/>
            <person name="Morgan M.B."/>
            <person name="Miner G."/>
            <person name="Hamilton C."/>
            <person name="Huang Y."/>
            <person name="Waldron L."/>
            <person name="Verduzco D."/>
            <person name="Clerc-Blankenburg K.P."/>
            <person name="Dubchak I."/>
            <person name="Noor M.A.F."/>
            <person name="Anderson W."/>
            <person name="White K.P."/>
            <person name="Clark A.G."/>
            <person name="Schaeffer S.W."/>
            <person name="Gelbart W.M."/>
            <person name="Weinstock G.M."/>
            <person name="Gibbs R.A."/>
        </authorList>
    </citation>
    <scope>NUCLEOTIDE SEQUENCE [LARGE SCALE GENOMIC DNA]</scope>
    <source>
        <strain>MV2-25 / Tucson 14011-0121.94</strain>
    </source>
</reference>
<gene>
    <name type="primary">Usp36</name>
    <name type="synonym">scny</name>
    <name type="ORF">GA18934</name>
</gene>
<sequence length="1059" mass="116372">MPVSMAVCETANVVNAALRESLGVGNGSRAADEAKKTGGGGGDDSDSEMHNQIAVSAYAKRILMSKIEYEEVPNYHDSVLEQLKNKYIVIKQPSNNNNSSSCNGSNFGNSKVVGANGHDNGNNGHRKLTQSESTQSGPSPNELPKPKRVLYPRENIRIGWKQSERKWQVGTGMINVGNTCYLNSTLQALFHIPALANWLVSEQTHLENCNITESNGGCIICAMAKTLQSTQSCQSAMRPFHIYSKLKQICKHMVVGRQEDAHEFLRFLVEAMEKAYLMRFRNFKELDQLVKETTPLNQIFGGYLRSEVRCLSCSHVSITFQHFQDLLLDIRKSDTLEEAFDGYFSRERLEDMGYKCEGCKKKVSATKQFSLERAPITLCIQLKRFSMIGNKLTKTISFKPRIDLSRFAARSPAAAAQPLTYRLVSMVTHLGVSQHCGHYTAIGMTESGSYYNFDDSYVRPIAMQSVCNTNAYIMFYELDLSQTTPLKSNGLRLTNGHSQVAVPATVSSSSPTHTRFIGPQLPPGGINGYSNGHATGSSNAQKTAIQFKQQQQHPQQNGLQVGTGKFQEPPHAKSPLAGAYNKGEAFPATTANGNKSSSSSASNSNHNKSVNQLQHQQHYLPISSEDEDSEDGATATATATATARPTAQLPSMPKMTEDSSDKPKTPLKSSVKTNLVKSLLKTPLKSLVPYESASEEDEPLPNPRKRRSDSDSNDSGDSDPQPGHVNGHTKTNGGSLTNGNGLGKAKTILATSSSSSLASASASAASDDEDADEEEENSKLTNGWQPQKQSQSLTQSKAPPSPKTPPSPAVIKSKTGIWKVTRNDDNEDEDDDDDEDEEEQHQVVSTPSKNPRNPFAKSSTTPGAKRQKLLNGIAVKSQQQPRVGNGYQSEASTNGNVVNELLKQTHRGYGSASVLSWSGKPAELEKELVAEAREQRQHDHDDEEENEMDRGRQRKVKSATAKAYNSSTPGYNPFQEYESQKRWHKSSNGGGSFPRYHNQNFRQNFQQRNKFKYNRFGGPGGAKFQQQRALQRHLASGGVFNRRQPTGQQQQQQSQQSSS</sequence>
<evidence type="ECO:0000250" key="1"/>
<evidence type="ECO:0000250" key="2">
    <source>
        <dbReference type="UniProtKB" id="Q9VRP5"/>
    </source>
</evidence>
<evidence type="ECO:0000255" key="3">
    <source>
        <dbReference type="PROSITE-ProRule" id="PRU10092"/>
    </source>
</evidence>
<evidence type="ECO:0000255" key="4">
    <source>
        <dbReference type="PROSITE-ProRule" id="PRU10093"/>
    </source>
</evidence>
<evidence type="ECO:0000256" key="5">
    <source>
        <dbReference type="SAM" id="MobiDB-lite"/>
    </source>
</evidence>
<evidence type="ECO:0000305" key="6"/>